<gene>
    <name type="primary">Fkbp4</name>
    <name type="synonym">Fkbp52</name>
</gene>
<evidence type="ECO:0000250" key="1"/>
<evidence type="ECO:0000250" key="2">
    <source>
        <dbReference type="UniProtKB" id="P27124"/>
    </source>
</evidence>
<evidence type="ECO:0000250" key="3">
    <source>
        <dbReference type="UniProtKB" id="P30416"/>
    </source>
</evidence>
<evidence type="ECO:0000250" key="4">
    <source>
        <dbReference type="UniProtKB" id="Q02790"/>
    </source>
</evidence>
<evidence type="ECO:0000255" key="5">
    <source>
        <dbReference type="PROSITE-ProRule" id="PRU00277"/>
    </source>
</evidence>
<evidence type="ECO:0000256" key="6">
    <source>
        <dbReference type="SAM" id="MobiDB-lite"/>
    </source>
</evidence>
<evidence type="ECO:0000269" key="7">
    <source>
    </source>
</evidence>
<evidence type="ECO:0000269" key="8">
    <source>
    </source>
</evidence>
<proteinExistence type="evidence at protein level"/>
<feature type="chain" id="PRO_0000391471" description="Peptidyl-prolyl cis-trans isomerase FKBP4">
    <location>
        <begin position="1"/>
        <end position="458"/>
    </location>
</feature>
<feature type="initiator methionine" description="Removed; alternate" evidence="4">
    <location>
        <position position="1"/>
    </location>
</feature>
<feature type="chain" id="PRO_0000075321" description="Peptidyl-prolyl cis-trans isomerase FKBP4, N-terminally processed">
    <location>
        <begin position="2"/>
        <end position="458"/>
    </location>
</feature>
<feature type="domain" description="PPIase FKBP-type 1" evidence="5">
    <location>
        <begin position="50"/>
        <end position="138"/>
    </location>
</feature>
<feature type="domain" description="PPIase FKBP-type 2" evidence="5">
    <location>
        <begin position="167"/>
        <end position="253"/>
    </location>
</feature>
<feature type="repeat" description="TPR 1">
    <location>
        <begin position="270"/>
        <end position="303"/>
    </location>
</feature>
<feature type="repeat" description="TPR 2">
    <location>
        <begin position="319"/>
        <end position="352"/>
    </location>
</feature>
<feature type="repeat" description="TPR 3">
    <location>
        <begin position="353"/>
        <end position="386"/>
    </location>
</feature>
<feature type="region of interest" description="Interaction with tubulin">
    <location>
        <begin position="267"/>
        <end position="400"/>
    </location>
</feature>
<feature type="region of interest" description="Disordered" evidence="6">
    <location>
        <begin position="423"/>
        <end position="458"/>
    </location>
</feature>
<feature type="compositionally biased region" description="Polar residues" evidence="6">
    <location>
        <begin position="447"/>
        <end position="458"/>
    </location>
</feature>
<feature type="modified residue" description="N-acetylmethionine; in peptidyl-prolyl cis-trans isomerase FKBP4; alternate" evidence="4">
    <location>
        <position position="1"/>
    </location>
</feature>
<feature type="modified residue" description="N-acetylthreonine; in peptidyl-prolyl cis-trans isomerase FKBP4, N-terminally processed; partial" evidence="4">
    <location>
        <position position="2"/>
    </location>
</feature>
<feature type="modified residue" description="Phosphothreonine; by CK2" evidence="2">
    <location>
        <position position="143"/>
    </location>
</feature>
<feature type="modified residue" description="Phosphotyrosine" evidence="4">
    <location>
        <position position="220"/>
    </location>
</feature>
<feature type="modified residue" description="N6-acetyllysine" evidence="4">
    <location>
        <position position="282"/>
    </location>
</feature>
<feature type="modified residue" description="Omega-N-methylarginine" evidence="3">
    <location>
        <position position="373"/>
    </location>
</feature>
<feature type="modified residue" description="Phosphothreonine" evidence="4">
    <location>
        <position position="436"/>
    </location>
</feature>
<feature type="cross-link" description="Glycyl lysine isopeptide (Lys-Gly) (interchain with G-Cter in SUMO1)" evidence="4">
    <location>
        <position position="441"/>
    </location>
</feature>
<keyword id="KW-0007">Acetylation</keyword>
<keyword id="KW-0966">Cell projection</keyword>
<keyword id="KW-0143">Chaperone</keyword>
<keyword id="KW-0963">Cytoplasm</keyword>
<keyword id="KW-0206">Cytoskeleton</keyword>
<keyword id="KW-0903">Direct protein sequencing</keyword>
<keyword id="KW-0413">Isomerase</keyword>
<keyword id="KW-1017">Isopeptide bond</keyword>
<keyword id="KW-0488">Methylation</keyword>
<keyword id="KW-0493">Microtubule</keyword>
<keyword id="KW-0496">Mitochondrion</keyword>
<keyword id="KW-0539">Nucleus</keyword>
<keyword id="KW-0597">Phosphoprotein</keyword>
<keyword id="KW-1185">Reference proteome</keyword>
<keyword id="KW-0677">Repeat</keyword>
<keyword id="KW-0697">Rotamase</keyword>
<keyword id="KW-0802">TPR repeat</keyword>
<keyword id="KW-0832">Ubl conjugation</keyword>
<accession>Q9QVC8</accession>
<accession>A6IM14</accession>
<accession>Q8K3U8</accession>
<comment type="function">
    <text evidence="1 7 8">Immunophilin protein with PPIase and co-chaperone activities (By similarity). Component of unligated steroid receptors heterocomplexes through interaction with heat-shock protein 90 (HSP90) (By similarity). Plays a role in the intracellular trafficking of heterooligomeric forms of steroid hormone receptors between cytoplasm and nuclear compartments. May have a protective role against oxidative stress in mitochondria (By similarity). Also acts as a regulator of microtubule dynamics by inhibiting MAPT/TAU ability to promote microtubule assembly. The PPIase activity controls neuronal growth cones via regulation of TRPC1 channel opening.</text>
</comment>
<comment type="catalytic activity">
    <reaction>
        <text>[protein]-peptidylproline (omega=180) = [protein]-peptidylproline (omega=0)</text>
        <dbReference type="Rhea" id="RHEA:16237"/>
        <dbReference type="Rhea" id="RHEA-COMP:10747"/>
        <dbReference type="Rhea" id="RHEA-COMP:10748"/>
        <dbReference type="ChEBI" id="CHEBI:83833"/>
        <dbReference type="ChEBI" id="CHEBI:83834"/>
        <dbReference type="EC" id="5.2.1.8"/>
    </reaction>
</comment>
<comment type="activity regulation">
    <text evidence="1">Inhibited by FK506.</text>
</comment>
<comment type="subunit">
    <text evidence="1 4 7 8">Homodimer (By similarity). Interacts with GLMN. Associates with HSP90AA1 and HSP70 in steroid hormone receptor complexes. Also interacts with peroxisomal phytanoyl-CoA alpha-hydroxylase (PHYH). Interacts with NR3C1 and dynein. Interacts with HSF1 in the HSP90 complex (By similarity). Associates with tubulin (PubMed:17435176). Interacts with MAPT/TAU (PubMed:20133804). Interacts (via TPR domain) with S100A1, S100A2 and S100A6; the interaction is Ca(2+) dependent. Interaction with S100A1 and S100A2 (but not with S100A6) leads to inhibition of FKBP4-HSP90 interaction. Interacts with dynein; causes partially NR3C1 transport to the nucleus (By similarity).</text>
</comment>
<comment type="subcellular location">
    <subcellularLocation>
        <location evidence="7 8">Cytoplasm</location>
        <location evidence="7 8">Cytosol</location>
    </subcellularLocation>
    <subcellularLocation>
        <location evidence="4">Mitochondrion</location>
    </subcellularLocation>
    <subcellularLocation>
        <location evidence="3">Nucleus</location>
    </subcellularLocation>
    <subcellularLocation>
        <location evidence="7">Cytoplasm</location>
        <location evidence="7">Cytoskeleton</location>
    </subcellularLocation>
    <subcellularLocation>
        <location evidence="8">Cell projection</location>
        <location evidence="8">Axon</location>
    </subcellularLocation>
    <text evidence="4 8">Shuttles from mitochondria to nucleus; co-localizes in mitochondria with the glucocorticoid receptor (By similarity). Colocalized with MAPT/TAU in the distal part of the primary cortical neurons (PubMed:20133804).</text>
</comment>
<comment type="tissue specificity">
    <text evidence="8">Widely detected in the brain (at protein level).</text>
</comment>
<comment type="domain">
    <text evidence="1">The PPIase activity is mainly due to the first PPIase FKBP-type domain (1-138 AA).</text>
</comment>
<comment type="domain">
    <text>The C-terminal region (AA 375-458) is required to prevent tubulin polymerization.</text>
</comment>
<comment type="domain">
    <text evidence="1">The chaperone activity resides in the C-terminal region, mainly between amino acids 264 and 400.</text>
</comment>
<comment type="domain">
    <text evidence="1">The TPR repeats mediate mitochondrial localization.</text>
</comment>
<comment type="PTM">
    <text>Phosphorylation by CK2 results in loss of HSP90 binding activity.</text>
</comment>
<comment type="online information" name="Protein Spotlight">
    <link uri="https://www.proteinspotlight.org/back_issues/118"/>
    <text>A mind astray - Issue 118 of June 2010</text>
</comment>
<organism>
    <name type="scientific">Rattus norvegicus</name>
    <name type="common">Rat</name>
    <dbReference type="NCBI Taxonomy" id="10116"/>
    <lineage>
        <taxon>Eukaryota</taxon>
        <taxon>Metazoa</taxon>
        <taxon>Chordata</taxon>
        <taxon>Craniata</taxon>
        <taxon>Vertebrata</taxon>
        <taxon>Euteleostomi</taxon>
        <taxon>Mammalia</taxon>
        <taxon>Eutheria</taxon>
        <taxon>Euarchontoglires</taxon>
        <taxon>Glires</taxon>
        <taxon>Rodentia</taxon>
        <taxon>Myomorpha</taxon>
        <taxon>Muroidea</taxon>
        <taxon>Muridae</taxon>
        <taxon>Murinae</taxon>
        <taxon>Rattus</taxon>
    </lineage>
</organism>
<sequence>MTAEEMKVAENGAQSAPLPLEGVDISPKQDEGVLKVIKREGTGTETAMIGDRVFVHYTGWLLDGTKFDSSLDRKDKFSFDLGKGEVIKAWDIAVATMKVGEVCHITCKPEYAYGSAGSPPKIPPNATLVFEVELFEFKGEDLTEDEDGGIIRRIRTRGEGYARPNDGAMVEVALEGYYNDRLFDQRELCFEVGEGESLDLPCGLEEAIQRMEKGEHSIVYLKPSYAFGSVGKERFQIPPHAELRYEVHLKSFEKAKASWEMNSEEKLEQSNIVKERGTVYFKEGKYKQALLQYKKIVSWLEYESSFSGEEMQKVHALRLASHLNLAMCHLKLQAFSAAIESCNKALELDSNNEKGLFRRGEAHLAVNDFDLARADFQKVLQLYPSNKAAKTQLAVCQQRTRRQLAREKKLYANMFERLAEEEHKAKTEVAAGDHPTDAEMKGEPNNVAGNQAQVKTEA</sequence>
<name>FKBP4_RAT</name>
<reference key="1">
    <citation type="submission" date="2005-09" db="EMBL/GenBank/DDBJ databases">
        <authorList>
            <person name="Mural R.J."/>
            <person name="Adams M.D."/>
            <person name="Myers E.W."/>
            <person name="Smith H.O."/>
            <person name="Venter J.C."/>
        </authorList>
    </citation>
    <scope>NUCLEOTIDE SEQUENCE [LARGE SCALE GENOMIC DNA]</scope>
</reference>
<reference key="2">
    <citation type="journal article" date="1992" name="Science">
        <title>Association of a 59-kilodalton immunophilin with the glucocorticoid receptor complex.</title>
        <authorList>
            <person name="Tai P.-K.K."/>
            <person name="Albers M.W."/>
            <person name="Chang H."/>
            <person name="Faber L.E."/>
            <person name="Schreiber S.L."/>
        </authorList>
    </citation>
    <scope>PROTEIN SEQUENCE OF 2-25</scope>
    <source>
        <tissue>Leukemia</tissue>
    </source>
</reference>
<reference key="3">
    <citation type="submission" date="2002-07" db="EMBL/GenBank/DDBJ databases">
        <authorList>
            <person name="Desai B.J."/>
            <person name="McKinney K.Q."/>
            <person name="Meyer M.H."/>
            <person name="Bahrani-Mostafavi Z."/>
            <person name="Meyer R.A. Jr."/>
        </authorList>
    </citation>
    <scope>NUCLEOTIDE SEQUENCE [MRNA] OF 57-458</scope>
    <source>
        <strain>Sprague-Dawley</strain>
        <tissue>Brain</tissue>
    </source>
</reference>
<reference key="4">
    <citation type="journal article" date="2007" name="FASEB J.">
        <title>The immunophilin FKBP52 specifically binds to tubulin and prevents microtubule formation.</title>
        <authorList>
            <person name="Chambraud B."/>
            <person name="Belabes H."/>
            <person name="Fontaine-Lenoir V."/>
            <person name="Fellous A."/>
            <person name="Baulieu E.E."/>
        </authorList>
    </citation>
    <scope>FUNCTION</scope>
    <scope>SUBCELLULAR LOCATION</scope>
    <scope>INTERACTION WITH TUBULIN</scope>
</reference>
<reference key="5">
    <citation type="journal article" date="2010" name="Proc. Natl. Acad. Sci. U.S.A.">
        <title>A role for FKBP52 in Tau protein function.</title>
        <authorList>
            <person name="Chambraud B."/>
            <person name="Sardin E."/>
            <person name="Giustiniani J."/>
            <person name="Dounane O."/>
            <person name="Schumacher M."/>
            <person name="Goedert M."/>
            <person name="Baulieu E.E."/>
        </authorList>
    </citation>
    <scope>FUNCTION</scope>
    <scope>SUBCELLULAR LOCATION</scope>
    <scope>TISSUE SPECIFICITY</scope>
    <scope>INTERACTION WITH MAPT</scope>
</reference>
<reference key="6">
    <citation type="submission" date="2009-01" db="UniProtKB">
        <authorList>
            <person name="Maurya D.K."/>
            <person name="Bhargava P."/>
        </authorList>
    </citation>
    <scope>IDENTIFICATION BY MASS SPECTROMETRY</scope>
</reference>
<protein>
    <recommendedName>
        <fullName>Peptidyl-prolyl cis-trans isomerase FKBP4</fullName>
        <shortName>PPIase FKBP4</shortName>
        <ecNumber>5.2.1.8</ecNumber>
    </recommendedName>
    <alternativeName>
        <fullName>52 kDa FK506-binding protein</fullName>
        <shortName>52 kDa FKBP</shortName>
        <shortName>FKBP-52</shortName>
    </alternativeName>
    <alternativeName>
        <fullName>59 kDa immunophilin</fullName>
        <shortName>p59</shortName>
    </alternativeName>
    <alternativeName>
        <fullName>FK506-binding protein 4</fullName>
        <shortName>FKBP-4</shortName>
    </alternativeName>
    <alternativeName>
        <fullName>FKBP59</fullName>
    </alternativeName>
    <alternativeName>
        <fullName>HSP-binding immunophilin</fullName>
        <shortName>HBI</shortName>
    </alternativeName>
    <alternativeName>
        <fullName>Immunophilin FKBP52</fullName>
    </alternativeName>
    <alternativeName>
        <fullName>Rotamase</fullName>
    </alternativeName>
    <component>
        <recommendedName>
            <fullName>Peptidyl-prolyl cis-trans isomerase FKBP4, N-terminally processed</fullName>
        </recommendedName>
    </component>
</protein>
<dbReference type="EC" id="5.2.1.8"/>
<dbReference type="EMBL" id="CH473964">
    <property type="protein sequence ID" value="EDM01775.1"/>
    <property type="molecule type" value="Genomic_DNA"/>
</dbReference>
<dbReference type="EMBL" id="AF531427">
    <property type="protein sequence ID" value="AAM95632.1"/>
    <property type="molecule type" value="mRNA"/>
</dbReference>
<dbReference type="RefSeq" id="NP_001178792.1">
    <property type="nucleotide sequence ID" value="NM_001191863.1"/>
</dbReference>
<dbReference type="SMR" id="Q9QVC8"/>
<dbReference type="BioGRID" id="251740">
    <property type="interactions" value="5"/>
</dbReference>
<dbReference type="DIP" id="DIP-59214N"/>
<dbReference type="FunCoup" id="Q9QVC8">
    <property type="interactions" value="2706"/>
</dbReference>
<dbReference type="IntAct" id="Q9QVC8">
    <property type="interactions" value="2"/>
</dbReference>
<dbReference type="MINT" id="Q9QVC8"/>
<dbReference type="STRING" id="10116.ENSRNOP00000008737"/>
<dbReference type="GlyGen" id="Q9QVC8">
    <property type="glycosylation" value="1 site, 1 O-linked glycan (1 site)"/>
</dbReference>
<dbReference type="iPTMnet" id="Q9QVC8"/>
<dbReference type="PhosphoSitePlus" id="Q9QVC8"/>
<dbReference type="jPOST" id="Q9QVC8"/>
<dbReference type="PaxDb" id="10116-ENSRNOP00000008737"/>
<dbReference type="Ensembl" id="ENSRNOT00000008737.7">
    <property type="protein sequence ID" value="ENSRNOP00000008737.6"/>
    <property type="gene ID" value="ENSRNOG00000006444.7"/>
</dbReference>
<dbReference type="GeneID" id="260321"/>
<dbReference type="KEGG" id="rno:260321"/>
<dbReference type="UCSC" id="RGD:628729">
    <property type="organism name" value="rat"/>
</dbReference>
<dbReference type="AGR" id="RGD:628729"/>
<dbReference type="CTD" id="2288"/>
<dbReference type="RGD" id="628729">
    <property type="gene designation" value="Fkbp4"/>
</dbReference>
<dbReference type="eggNOG" id="KOG0543">
    <property type="taxonomic scope" value="Eukaryota"/>
</dbReference>
<dbReference type="GeneTree" id="ENSGT00940000157200"/>
<dbReference type="HOGENOM" id="CLU_013615_13_1_1"/>
<dbReference type="InParanoid" id="Q9QVC8"/>
<dbReference type="OMA" id="FGAEGNE"/>
<dbReference type="OrthoDB" id="433738at2759"/>
<dbReference type="PhylomeDB" id="Q9QVC8"/>
<dbReference type="Reactome" id="R-RNO-3371497">
    <property type="pathway name" value="HSP90 chaperone cycle for steroid hormone receptors (SHR) in the presence of ligand"/>
</dbReference>
<dbReference type="Reactome" id="R-RNO-3371568">
    <property type="pathway name" value="Attenuation phase"/>
</dbReference>
<dbReference type="Reactome" id="R-RNO-8939211">
    <property type="pathway name" value="ESR-mediated signaling"/>
</dbReference>
<dbReference type="Reactome" id="R-RNO-9018519">
    <property type="pathway name" value="Estrogen-dependent gene expression"/>
</dbReference>
<dbReference type="PRO" id="PR:Q9QVC8"/>
<dbReference type="Proteomes" id="UP000002494">
    <property type="component" value="Chromosome 4"/>
</dbReference>
<dbReference type="Proteomes" id="UP000234681">
    <property type="component" value="Chromosome 4"/>
</dbReference>
<dbReference type="Bgee" id="ENSRNOG00000006444">
    <property type="expression patterns" value="Expressed in heart and 19 other cell types or tissues"/>
</dbReference>
<dbReference type="GO" id="GO:0044295">
    <property type="term" value="C:axonal growth cone"/>
    <property type="evidence" value="ECO:0000314"/>
    <property type="project" value="UniProtKB"/>
</dbReference>
<dbReference type="GO" id="GO:0005737">
    <property type="term" value="C:cytoplasm"/>
    <property type="evidence" value="ECO:0000318"/>
    <property type="project" value="GO_Central"/>
</dbReference>
<dbReference type="GO" id="GO:0005829">
    <property type="term" value="C:cytosol"/>
    <property type="evidence" value="ECO:0000314"/>
    <property type="project" value="UniProtKB"/>
</dbReference>
<dbReference type="GO" id="GO:0005874">
    <property type="term" value="C:microtubule"/>
    <property type="evidence" value="ECO:0007669"/>
    <property type="project" value="UniProtKB-KW"/>
</dbReference>
<dbReference type="GO" id="GO:0005739">
    <property type="term" value="C:mitochondrion"/>
    <property type="evidence" value="ECO:0007669"/>
    <property type="project" value="UniProtKB-SubCell"/>
</dbReference>
<dbReference type="GO" id="GO:0043025">
    <property type="term" value="C:neuronal cell body"/>
    <property type="evidence" value="ECO:0000314"/>
    <property type="project" value="RGD"/>
</dbReference>
<dbReference type="GO" id="GO:0005654">
    <property type="term" value="C:nucleoplasm"/>
    <property type="evidence" value="ECO:0007669"/>
    <property type="project" value="Ensembl"/>
</dbReference>
<dbReference type="GO" id="GO:0005634">
    <property type="term" value="C:nucleus"/>
    <property type="evidence" value="ECO:0000266"/>
    <property type="project" value="RGD"/>
</dbReference>
<dbReference type="GO" id="GO:0048471">
    <property type="term" value="C:perinuclear region of cytoplasm"/>
    <property type="evidence" value="ECO:0000314"/>
    <property type="project" value="RGD"/>
</dbReference>
<dbReference type="GO" id="GO:0032991">
    <property type="term" value="C:protein-containing complex"/>
    <property type="evidence" value="ECO:0000314"/>
    <property type="project" value="RGD"/>
</dbReference>
<dbReference type="GO" id="GO:0005524">
    <property type="term" value="F:ATP binding"/>
    <property type="evidence" value="ECO:0000266"/>
    <property type="project" value="RGD"/>
</dbReference>
<dbReference type="GO" id="GO:0032767">
    <property type="term" value="F:copper-dependent protein binding"/>
    <property type="evidence" value="ECO:0000353"/>
    <property type="project" value="RGD"/>
</dbReference>
<dbReference type="GO" id="GO:0005525">
    <property type="term" value="F:GTP binding"/>
    <property type="evidence" value="ECO:0000266"/>
    <property type="project" value="RGD"/>
</dbReference>
<dbReference type="GO" id="GO:0031072">
    <property type="term" value="F:heat shock protein binding"/>
    <property type="evidence" value="ECO:0000266"/>
    <property type="project" value="RGD"/>
</dbReference>
<dbReference type="GO" id="GO:0035259">
    <property type="term" value="F:nuclear glucocorticoid receptor binding"/>
    <property type="evidence" value="ECO:0000266"/>
    <property type="project" value="RGD"/>
</dbReference>
<dbReference type="GO" id="GO:0003755">
    <property type="term" value="F:peptidyl-prolyl cis-trans isomerase activity"/>
    <property type="evidence" value="ECO:0000250"/>
    <property type="project" value="UniProtKB"/>
</dbReference>
<dbReference type="GO" id="GO:0051219">
    <property type="term" value="F:phosphoprotein binding"/>
    <property type="evidence" value="ECO:0000266"/>
    <property type="project" value="RGD"/>
</dbReference>
<dbReference type="GO" id="GO:0048156">
    <property type="term" value="F:tau protein binding"/>
    <property type="evidence" value="ECO:0000353"/>
    <property type="project" value="UniProtKB"/>
</dbReference>
<dbReference type="GO" id="GO:0030521">
    <property type="term" value="P:androgen receptor signaling pathway"/>
    <property type="evidence" value="ECO:0000266"/>
    <property type="project" value="RGD"/>
</dbReference>
<dbReference type="GO" id="GO:0061077">
    <property type="term" value="P:chaperone-mediated protein folding"/>
    <property type="evidence" value="ECO:0000250"/>
    <property type="project" value="UniProtKB"/>
</dbReference>
<dbReference type="GO" id="GO:0006825">
    <property type="term" value="P:copper ion transport"/>
    <property type="evidence" value="ECO:0000315"/>
    <property type="project" value="RGD"/>
</dbReference>
<dbReference type="GO" id="GO:0007566">
    <property type="term" value="P:embryo implantation"/>
    <property type="evidence" value="ECO:0000266"/>
    <property type="project" value="RGD"/>
</dbReference>
<dbReference type="GO" id="GO:0046661">
    <property type="term" value="P:male sex differentiation"/>
    <property type="evidence" value="ECO:0000266"/>
    <property type="project" value="RGD"/>
</dbReference>
<dbReference type="GO" id="GO:0031115">
    <property type="term" value="P:negative regulation of microtubule polymerization"/>
    <property type="evidence" value="ECO:0000315"/>
    <property type="project" value="RGD"/>
</dbReference>
<dbReference type="GO" id="GO:0031111">
    <property type="term" value="P:negative regulation of microtubule polymerization or depolymerization"/>
    <property type="evidence" value="ECO:0000250"/>
    <property type="project" value="UniProtKB"/>
</dbReference>
<dbReference type="GO" id="GO:0010977">
    <property type="term" value="P:negative regulation of neuron projection development"/>
    <property type="evidence" value="ECO:0000250"/>
    <property type="project" value="UniProtKB"/>
</dbReference>
<dbReference type="GO" id="GO:0030850">
    <property type="term" value="P:prostate gland development"/>
    <property type="evidence" value="ECO:0000266"/>
    <property type="project" value="RGD"/>
</dbReference>
<dbReference type="GO" id="GO:0031503">
    <property type="term" value="P:protein-containing complex localization"/>
    <property type="evidence" value="ECO:0000266"/>
    <property type="project" value="RGD"/>
</dbReference>
<dbReference type="GO" id="GO:0048608">
    <property type="term" value="P:reproductive structure development"/>
    <property type="evidence" value="ECO:0000266"/>
    <property type="project" value="RGD"/>
</dbReference>
<dbReference type="GO" id="GO:0006463">
    <property type="term" value="P:steroid hormone receptor complex assembly"/>
    <property type="evidence" value="ECO:0000266"/>
    <property type="project" value="RGD"/>
</dbReference>
<dbReference type="FunFam" id="1.25.40.10:FF:000008">
    <property type="entry name" value="Peptidylprolyl isomerase"/>
    <property type="match status" value="1"/>
</dbReference>
<dbReference type="FunFam" id="3.10.50.40:FF:000011">
    <property type="entry name" value="Peptidylprolyl isomerase"/>
    <property type="match status" value="1"/>
</dbReference>
<dbReference type="FunFam" id="3.10.50.40:FF:000013">
    <property type="entry name" value="Peptidylprolyl isomerase"/>
    <property type="match status" value="1"/>
</dbReference>
<dbReference type="Gene3D" id="3.10.50.40">
    <property type="match status" value="2"/>
</dbReference>
<dbReference type="Gene3D" id="1.25.40.10">
    <property type="entry name" value="Tetratricopeptide repeat domain"/>
    <property type="match status" value="1"/>
</dbReference>
<dbReference type="InterPro" id="IPR050754">
    <property type="entry name" value="FKBP4/5/8-like"/>
</dbReference>
<dbReference type="InterPro" id="IPR046357">
    <property type="entry name" value="PPIase_dom_sf"/>
</dbReference>
<dbReference type="InterPro" id="IPR001179">
    <property type="entry name" value="PPIase_FKBP_dom"/>
</dbReference>
<dbReference type="InterPro" id="IPR011990">
    <property type="entry name" value="TPR-like_helical_dom_sf"/>
</dbReference>
<dbReference type="InterPro" id="IPR013105">
    <property type="entry name" value="TPR_2"/>
</dbReference>
<dbReference type="InterPro" id="IPR019734">
    <property type="entry name" value="TPR_rpt"/>
</dbReference>
<dbReference type="PANTHER" id="PTHR46512">
    <property type="entry name" value="PEPTIDYLPROLYL ISOMERASE"/>
    <property type="match status" value="1"/>
</dbReference>
<dbReference type="PANTHER" id="PTHR46512:SF9">
    <property type="entry name" value="PEPTIDYLPROLYL ISOMERASE"/>
    <property type="match status" value="1"/>
</dbReference>
<dbReference type="Pfam" id="PF00254">
    <property type="entry name" value="FKBP_C"/>
    <property type="match status" value="2"/>
</dbReference>
<dbReference type="Pfam" id="PF00515">
    <property type="entry name" value="TPR_1"/>
    <property type="match status" value="1"/>
</dbReference>
<dbReference type="Pfam" id="PF07719">
    <property type="entry name" value="TPR_2"/>
    <property type="match status" value="1"/>
</dbReference>
<dbReference type="SMART" id="SM00028">
    <property type="entry name" value="TPR"/>
    <property type="match status" value="3"/>
</dbReference>
<dbReference type="SUPFAM" id="SSF54534">
    <property type="entry name" value="FKBP-like"/>
    <property type="match status" value="2"/>
</dbReference>
<dbReference type="SUPFAM" id="SSF48452">
    <property type="entry name" value="TPR-like"/>
    <property type="match status" value="1"/>
</dbReference>
<dbReference type="PROSITE" id="PS50059">
    <property type="entry name" value="FKBP_PPIASE"/>
    <property type="match status" value="2"/>
</dbReference>
<dbReference type="PROSITE" id="PS50005">
    <property type="entry name" value="TPR"/>
    <property type="match status" value="3"/>
</dbReference>
<dbReference type="PROSITE" id="PS50293">
    <property type="entry name" value="TPR_REGION"/>
    <property type="match status" value="2"/>
</dbReference>